<organism>
    <name type="scientific">Arabidopsis lyrata subsp. lyrata</name>
    <name type="common">Lyre-leaved rock-cress</name>
    <dbReference type="NCBI Taxonomy" id="81972"/>
    <lineage>
        <taxon>Eukaryota</taxon>
        <taxon>Viridiplantae</taxon>
        <taxon>Streptophyta</taxon>
        <taxon>Embryophyta</taxon>
        <taxon>Tracheophyta</taxon>
        <taxon>Spermatophyta</taxon>
        <taxon>Magnoliopsida</taxon>
        <taxon>eudicotyledons</taxon>
        <taxon>Gunneridae</taxon>
        <taxon>Pentapetalae</taxon>
        <taxon>rosids</taxon>
        <taxon>malvids</taxon>
        <taxon>Brassicales</taxon>
        <taxon>Brassicaceae</taxon>
        <taxon>Camelineae</taxon>
        <taxon>Arabidopsis</taxon>
    </lineage>
</organism>
<name>CASP3_ARALL</name>
<feature type="chain" id="PRO_0000411997" description="Casparian strip membrane protein 3">
    <location>
        <begin position="1"/>
        <end position="221"/>
    </location>
</feature>
<feature type="topological domain" description="Cytoplasmic" evidence="2">
    <location>
        <begin position="1"/>
        <end position="58"/>
    </location>
</feature>
<feature type="transmembrane region" description="Helical" evidence="2">
    <location>
        <begin position="59"/>
        <end position="79"/>
    </location>
</feature>
<feature type="topological domain" description="Extracellular" evidence="2">
    <location>
        <begin position="80"/>
        <end position="109"/>
    </location>
</feature>
<feature type="transmembrane region" description="Helical" evidence="2">
    <location>
        <begin position="110"/>
        <end position="130"/>
    </location>
</feature>
<feature type="topological domain" description="Cytoplasmic" evidence="2">
    <location>
        <begin position="131"/>
        <end position="148"/>
    </location>
</feature>
<feature type="transmembrane region" description="Helical" evidence="2">
    <location>
        <begin position="149"/>
        <end position="169"/>
    </location>
</feature>
<feature type="topological domain" description="Extracellular" evidence="2">
    <location>
        <begin position="170"/>
        <end position="194"/>
    </location>
</feature>
<feature type="transmembrane region" description="Helical" evidence="2">
    <location>
        <begin position="195"/>
        <end position="215"/>
    </location>
</feature>
<feature type="topological domain" description="Cytoplasmic" evidence="2">
    <location>
        <begin position="216"/>
        <end position="221"/>
    </location>
</feature>
<feature type="region of interest" description="Disordered" evidence="3">
    <location>
        <begin position="1"/>
        <end position="28"/>
    </location>
</feature>
<feature type="compositionally biased region" description="Basic and acidic residues" evidence="3">
    <location>
        <begin position="1"/>
        <end position="12"/>
    </location>
</feature>
<feature type="glycosylation site" description="N-linked (GlcNAc...) asparagine" evidence="2">
    <location>
        <position position="173"/>
    </location>
</feature>
<proteinExistence type="inferred from homology"/>
<accession>D7LGW9</accession>
<keyword id="KW-1003">Cell membrane</keyword>
<keyword id="KW-0961">Cell wall biogenesis/degradation</keyword>
<keyword id="KW-0325">Glycoprotein</keyword>
<keyword id="KW-0472">Membrane</keyword>
<keyword id="KW-1185">Reference proteome</keyword>
<keyword id="KW-0812">Transmembrane</keyword>
<keyword id="KW-1133">Transmembrane helix</keyword>
<evidence type="ECO:0000250" key="1"/>
<evidence type="ECO:0000255" key="2"/>
<evidence type="ECO:0000256" key="3">
    <source>
        <dbReference type="SAM" id="MobiDB-lite"/>
    </source>
</evidence>
<evidence type="ECO:0000305" key="4"/>
<protein>
    <recommendedName>
        <fullName>Casparian strip membrane protein 3</fullName>
        <shortName>AlCASP3</shortName>
    </recommendedName>
</protein>
<comment type="function">
    <text evidence="1">Regulates membrane-cell wall junctions and localized cell wall deposition. Required for establishment of the Casparian strip membrane domain (CSD) and the subsequent formation of Casparian strips, a cell wall modification of the root endodermis that determines an apoplastic barrier between the intraorganismal apoplasm and the extraorganismal apoplasm and prevents lateral diffusion (By similarity).</text>
</comment>
<comment type="subunit">
    <text evidence="1">Homodimer and heterodimers.</text>
</comment>
<comment type="subcellular location">
    <subcellularLocation>
        <location evidence="1">Cell membrane</location>
        <topology evidence="1">Multi-pass membrane protein</topology>
    </subcellularLocation>
    <text evidence="1">Very restricted localization following a belt shape within the plasma membrane which coincides with the position of the Casparian strip membrane domain in the root endodermis.</text>
</comment>
<comment type="similarity">
    <text evidence="4">Belongs to the Casparian strip membrane proteins (CASP) family.</text>
</comment>
<dbReference type="EMBL" id="GL348716">
    <property type="protein sequence ID" value="EFH57170.1"/>
    <property type="molecule type" value="Genomic_DNA"/>
</dbReference>
<dbReference type="SMR" id="D7LGW9"/>
<dbReference type="STRING" id="81972.D7LGW9"/>
<dbReference type="EnsemblPlants" id="scaffold_401136.1">
    <property type="protein sequence ID" value="scaffold_401136.1"/>
    <property type="gene ID" value="scaffold_401136.1"/>
</dbReference>
<dbReference type="Gramene" id="scaffold_401136.1">
    <property type="protein sequence ID" value="scaffold_401136.1"/>
    <property type="gene ID" value="scaffold_401136.1"/>
</dbReference>
<dbReference type="KEGG" id="aly:9315151"/>
<dbReference type="eggNOG" id="ENOG502RXQU">
    <property type="taxonomic scope" value="Eukaryota"/>
</dbReference>
<dbReference type="HOGENOM" id="CLU_066104_3_1_1"/>
<dbReference type="OrthoDB" id="753675at2759"/>
<dbReference type="Proteomes" id="UP000008694">
    <property type="component" value="Unassembled WGS sequence"/>
</dbReference>
<dbReference type="GO" id="GO:0048226">
    <property type="term" value="C:Casparian strip"/>
    <property type="evidence" value="ECO:0007669"/>
    <property type="project" value="EnsemblPlants"/>
</dbReference>
<dbReference type="GO" id="GO:0005886">
    <property type="term" value="C:plasma membrane"/>
    <property type="evidence" value="ECO:0007669"/>
    <property type="project" value="UniProtKB-SubCell"/>
</dbReference>
<dbReference type="GO" id="GO:0042803">
    <property type="term" value="F:protein homodimerization activity"/>
    <property type="evidence" value="ECO:0007669"/>
    <property type="project" value="EnsemblPlants"/>
</dbReference>
<dbReference type="GO" id="GO:0042545">
    <property type="term" value="P:cell wall modification"/>
    <property type="evidence" value="ECO:0007669"/>
    <property type="project" value="EnsemblPlants"/>
</dbReference>
<dbReference type="GO" id="GO:0007043">
    <property type="term" value="P:cell-cell junction assembly"/>
    <property type="evidence" value="ECO:0007669"/>
    <property type="project" value="EnsemblPlants"/>
</dbReference>
<dbReference type="InterPro" id="IPR006459">
    <property type="entry name" value="CASP/CASPL"/>
</dbReference>
<dbReference type="InterPro" id="IPR006702">
    <property type="entry name" value="CASP_dom"/>
</dbReference>
<dbReference type="InterPro" id="IPR044173">
    <property type="entry name" value="CASPL"/>
</dbReference>
<dbReference type="NCBIfam" id="TIGR01569">
    <property type="entry name" value="A_tha_TIGR01569"/>
    <property type="match status" value="1"/>
</dbReference>
<dbReference type="PANTHER" id="PTHR36488:SF11">
    <property type="entry name" value="CASP-LIKE PROTEIN"/>
    <property type="match status" value="1"/>
</dbReference>
<dbReference type="PANTHER" id="PTHR36488">
    <property type="entry name" value="CASP-LIKE PROTEIN 1U1"/>
    <property type="match status" value="1"/>
</dbReference>
<dbReference type="Pfam" id="PF04535">
    <property type="entry name" value="CASP_dom"/>
    <property type="match status" value="1"/>
</dbReference>
<reference key="1">
    <citation type="journal article" date="2011" name="Nat. Genet.">
        <title>The Arabidopsis lyrata genome sequence and the basis of rapid genome size change.</title>
        <authorList>
            <person name="Hu T.T."/>
            <person name="Pattyn P."/>
            <person name="Bakker E.G."/>
            <person name="Cao J."/>
            <person name="Cheng J.-F."/>
            <person name="Clark R.M."/>
            <person name="Fahlgren N."/>
            <person name="Fawcett J.A."/>
            <person name="Grimwood J."/>
            <person name="Gundlach H."/>
            <person name="Haberer G."/>
            <person name="Hollister J.D."/>
            <person name="Ossowski S."/>
            <person name="Ottilar R.P."/>
            <person name="Salamov A.A."/>
            <person name="Schneeberger K."/>
            <person name="Spannagl M."/>
            <person name="Wang X."/>
            <person name="Yang L."/>
            <person name="Nasrallah M.E."/>
            <person name="Bergelson J."/>
            <person name="Carrington J.C."/>
            <person name="Gaut B.S."/>
            <person name="Schmutz J."/>
            <person name="Mayer K.F.X."/>
            <person name="Van de Peer Y."/>
            <person name="Grigoriev I.V."/>
            <person name="Nordborg M."/>
            <person name="Weigel D."/>
            <person name="Guo Y.-L."/>
        </authorList>
    </citation>
    <scope>NUCLEOTIDE SEQUENCE [LARGE SCALE GENOMIC DNA]</scope>
    <source>
        <strain>cv. MN47</strain>
    </source>
</reference>
<reference key="2">
    <citation type="journal article" date="2014" name="Plant Physiol.">
        <title>Functional and evolutionary analysis of the CASPARIAN STRIP MEMBRANE DOMAIN PROTEIN family.</title>
        <authorList>
            <person name="Roppolo D."/>
            <person name="Boeckmann B."/>
            <person name="Pfister A."/>
            <person name="Boutet E."/>
            <person name="Rubio M.C."/>
            <person name="Denervaud-Tendon V."/>
            <person name="Vermeer J.E."/>
            <person name="Gheyselinck J."/>
            <person name="Xenarios I."/>
            <person name="Geldner N."/>
        </authorList>
    </citation>
    <scope>GENE FAMILY</scope>
    <scope>NOMENCLATURE</scope>
</reference>
<sequence length="221" mass="24107">MDIEKAASRREEEEPIVQRPKLDKGKGKAHVFAPPMNYNRIMDKHKQEKVSAAGWKRGVAIFDFVLRLIAAITAMAAAAKMATTEETLPFFTQFLQFQAEYTDLPTMSSFVIVNSIVGGYLTLSLPFSIVCILRPLAVPPRLFLIICDTAMMGLTMMAASASAAIVYLAHNGNSSSNWLPVCQQFGDFCQGTSGAVVASFIAATLLMFLVILSAFALKRST</sequence>
<gene>
    <name type="ORF">ARALYDRAFT_901635</name>
</gene>